<comment type="function">
    <text evidence="1">Cadherins are calcium-dependent cell adhesion proteins. They preferentially interact with themselves in a homophilic manner in connecting cells; cadherins may thus contribute to the sorting of heterogeneous cell types. May act as a negative regulator of neural cell growth (By similarity).</text>
</comment>
<comment type="subunit">
    <text evidence="1">By contrast to classical cadherins, homodimerization in trans is not mediated by cadherin EC1 domain strand-swapping, but instead through a homophilic adhesive interface which joins two elongated EC1-EC2 domains through a region near their Ca2+-binding sites to form a tetrahedral, X-like shape.</text>
</comment>
<comment type="subcellular location">
    <subcellularLocation>
        <location evidence="2">Cell membrane</location>
        <topology evidence="3">Lipid-anchor</topology>
        <topology evidence="3">GPI-anchor</topology>
    </subcellularLocation>
    <subcellularLocation>
        <location evidence="2">Cytoplasm</location>
    </subcellularLocation>
</comment>
<comment type="domain">
    <text evidence="1">Three calcium ions are usually bound at the interface of each cadherin domain and rigidify the connections, imparting a strong curvature to the full-length ectodomain.</text>
</comment>
<evidence type="ECO:0000250" key="1"/>
<evidence type="ECO:0000250" key="2">
    <source>
        <dbReference type="UniProtKB" id="Q9WTR5"/>
    </source>
</evidence>
<evidence type="ECO:0000255" key="3"/>
<evidence type="ECO:0000255" key="4">
    <source>
        <dbReference type="PROSITE-ProRule" id="PRU00043"/>
    </source>
</evidence>
<sequence length="713" mass="78266">MQPRTPLVLCVLLSQVLLLTSAEDLDCIPGFQQKVFHINQPAEFIEDQSILNLTFSDCKGNDKLRYEVSSPYFKVNSDGGLVALRNITAVGKTLFVHARTPHAEDMAELVIVGGKDIQGSLQDIFKFARTSPVPRQKRSIVVSPILIPENQRQPFPRDVGKVVDSDRPERSKFRLTGKGVDQEPKGIFRINENTGSVSVTRTLDREVIAVYQLFVETTDVNGKTLEGPVPLEVIVIDQNDNRPIFREGPYIGHVMEGSPTGTTVMRMTAFDADDPATDNALLRYNIRQQTPDKPSPNMFYIDPEKGDIVTVVSPALLDRETLENPKYELIIEAQDMAGLDVGLTGTATATIMIDDKNDHSPKFTKKEFQATVEEGAVGVIVNLTVEDKDDPTTGAWRAAYTIINGNPGQSFEIHTNPQTNEGMLSVVKPLGYEISAFHTLLIKVENEDPLVPDVSYGPSSTATVHITVLDVNEGPVFYPDPMMVTRQENISVGSVLLTVNATDPDSLQHQTIRYSVYKDPAGWLNINPINGTVDTTAVLDRESPFVDNSVYTALFLAIDSGNPPATGTGTLLITLEDVNDNAPFIYPTVAEVCDDAKNLSVVILGASDKDLHPNTDPFKFEIHKQAVPDKVWKISKINNTHALVSLLQNLNKANYNLPIMVTDSGKPPMTNITDLRVQVCSCRNSKVDSNAVGALRFSLPSLLLLSLFSLACL</sequence>
<proteinExistence type="evidence at transcript level"/>
<feature type="signal peptide" evidence="3">
    <location>
        <begin position="1"/>
        <end position="22"/>
    </location>
</feature>
<feature type="propeptide" id="PRO_0000003799" evidence="1">
    <location>
        <begin position="23"/>
        <end position="138"/>
    </location>
</feature>
<feature type="chain" id="PRO_0000003800" description="Cadherin-13">
    <location>
        <begin position="139"/>
        <end position="690"/>
    </location>
</feature>
<feature type="propeptide" id="PRO_0000003801" description="Removed in mature form" evidence="3">
    <location>
        <begin position="691"/>
        <end position="713"/>
    </location>
</feature>
<feature type="domain" description="Cadherin 1" evidence="4">
    <location>
        <begin position="139"/>
        <end position="245"/>
    </location>
</feature>
<feature type="domain" description="Cadherin 2" evidence="4">
    <location>
        <begin position="246"/>
        <end position="363"/>
    </location>
</feature>
<feature type="domain" description="Cadherin 3" evidence="4">
    <location>
        <begin position="364"/>
        <end position="477"/>
    </location>
</feature>
<feature type="domain" description="Cadherin 4" evidence="4">
    <location>
        <begin position="478"/>
        <end position="585"/>
    </location>
</feature>
<feature type="domain" description="Cadherin 5" evidence="4">
    <location>
        <begin position="584"/>
        <end position="690"/>
    </location>
</feature>
<feature type="lipid moiety-binding region" description="GPI-anchor amidated asparagine" evidence="3">
    <location>
        <position position="690"/>
    </location>
</feature>
<feature type="glycosylation site" description="N-linked (GlcNAc...) asparagine" evidence="3">
    <location>
        <position position="52"/>
    </location>
</feature>
<feature type="glycosylation site" description="N-linked (GlcNAc...) asparagine" evidence="3">
    <location>
        <position position="86"/>
    </location>
</feature>
<feature type="glycosylation site" description="N-linked (GlcNAc...) asparagine" evidence="3">
    <location>
        <position position="382"/>
    </location>
</feature>
<feature type="glycosylation site" description="N-linked (GlcNAc...) asparagine" evidence="3">
    <location>
        <position position="489"/>
    </location>
</feature>
<feature type="glycosylation site" description="N-linked (GlcNAc...) asparagine" evidence="3">
    <location>
        <position position="500"/>
    </location>
</feature>
<feature type="glycosylation site" description="N-linked (GlcNAc...) asparagine" evidence="3">
    <location>
        <position position="530"/>
    </location>
</feature>
<feature type="glycosylation site" description="N-linked (GlcNAc...) asparagine" evidence="3">
    <location>
        <position position="598"/>
    </location>
</feature>
<feature type="glycosylation site" description="N-linked (GlcNAc...) asparagine" evidence="3">
    <location>
        <position position="638"/>
    </location>
</feature>
<feature type="glycosylation site" description="N-linked (GlcNAc...) asparagine" evidence="3">
    <location>
        <position position="671"/>
    </location>
</feature>
<reference key="1">
    <citation type="submission" date="2004-11" db="EMBL/GenBank/DDBJ databases">
        <authorList>
            <consortium name="The German cDNA consortium"/>
        </authorList>
    </citation>
    <scope>NUCLEOTIDE SEQUENCE [LARGE SCALE MRNA]</scope>
    <source>
        <tissue>Brain cortex</tissue>
    </source>
</reference>
<accession>Q5R5W6</accession>
<name>CAD13_PONAB</name>
<organism>
    <name type="scientific">Pongo abelii</name>
    <name type="common">Sumatran orangutan</name>
    <name type="synonym">Pongo pygmaeus abelii</name>
    <dbReference type="NCBI Taxonomy" id="9601"/>
    <lineage>
        <taxon>Eukaryota</taxon>
        <taxon>Metazoa</taxon>
        <taxon>Chordata</taxon>
        <taxon>Craniata</taxon>
        <taxon>Vertebrata</taxon>
        <taxon>Euteleostomi</taxon>
        <taxon>Mammalia</taxon>
        <taxon>Eutheria</taxon>
        <taxon>Euarchontoglires</taxon>
        <taxon>Primates</taxon>
        <taxon>Haplorrhini</taxon>
        <taxon>Catarrhini</taxon>
        <taxon>Hominidae</taxon>
        <taxon>Pongo</taxon>
    </lineage>
</organism>
<gene>
    <name type="primary">CDH13</name>
</gene>
<keyword id="KW-0106">Calcium</keyword>
<keyword id="KW-0130">Cell adhesion</keyword>
<keyword id="KW-1003">Cell membrane</keyword>
<keyword id="KW-0165">Cleavage on pair of basic residues</keyword>
<keyword id="KW-0963">Cytoplasm</keyword>
<keyword id="KW-0325">Glycoprotein</keyword>
<keyword id="KW-0336">GPI-anchor</keyword>
<keyword id="KW-0449">Lipoprotein</keyword>
<keyword id="KW-0472">Membrane</keyword>
<keyword id="KW-0479">Metal-binding</keyword>
<keyword id="KW-1185">Reference proteome</keyword>
<keyword id="KW-0677">Repeat</keyword>
<keyword id="KW-0732">Signal</keyword>
<protein>
    <recommendedName>
        <fullName>Cadherin-13</fullName>
    </recommendedName>
</protein>
<dbReference type="EMBL" id="CR860736">
    <property type="protein sequence ID" value="CAH92850.1"/>
    <property type="molecule type" value="mRNA"/>
</dbReference>
<dbReference type="RefSeq" id="NP_001126665.1">
    <property type="nucleotide sequence ID" value="NM_001133193.1"/>
</dbReference>
<dbReference type="BMRB" id="Q5R5W6"/>
<dbReference type="SMR" id="Q5R5W6"/>
<dbReference type="FunCoup" id="Q5R5W6">
    <property type="interactions" value="186"/>
</dbReference>
<dbReference type="STRING" id="9601.ENSPPYP00000008568"/>
<dbReference type="GlyCosmos" id="Q5R5W6">
    <property type="glycosylation" value="9 sites, No reported glycans"/>
</dbReference>
<dbReference type="GeneID" id="100173665"/>
<dbReference type="KEGG" id="pon:100173665"/>
<dbReference type="CTD" id="1012"/>
<dbReference type="eggNOG" id="KOG3594">
    <property type="taxonomic scope" value="Eukaryota"/>
</dbReference>
<dbReference type="InParanoid" id="Q5R5W6"/>
<dbReference type="OrthoDB" id="9933746at2759"/>
<dbReference type="Proteomes" id="UP000001595">
    <property type="component" value="Unplaced"/>
</dbReference>
<dbReference type="GO" id="GO:0005912">
    <property type="term" value="C:adherens junction"/>
    <property type="evidence" value="ECO:0007669"/>
    <property type="project" value="TreeGrafter"/>
</dbReference>
<dbReference type="GO" id="GO:0016342">
    <property type="term" value="C:catenin complex"/>
    <property type="evidence" value="ECO:0007669"/>
    <property type="project" value="TreeGrafter"/>
</dbReference>
<dbReference type="GO" id="GO:0005737">
    <property type="term" value="C:cytoplasm"/>
    <property type="evidence" value="ECO:0007669"/>
    <property type="project" value="UniProtKB-SubCell"/>
</dbReference>
<dbReference type="GO" id="GO:0098552">
    <property type="term" value="C:side of membrane"/>
    <property type="evidence" value="ECO:0007669"/>
    <property type="project" value="UniProtKB-KW"/>
</dbReference>
<dbReference type="GO" id="GO:0008013">
    <property type="term" value="F:beta-catenin binding"/>
    <property type="evidence" value="ECO:0007669"/>
    <property type="project" value="TreeGrafter"/>
</dbReference>
<dbReference type="GO" id="GO:0045296">
    <property type="term" value="F:cadherin binding"/>
    <property type="evidence" value="ECO:0007669"/>
    <property type="project" value="TreeGrafter"/>
</dbReference>
<dbReference type="GO" id="GO:0005509">
    <property type="term" value="F:calcium ion binding"/>
    <property type="evidence" value="ECO:0007669"/>
    <property type="project" value="InterPro"/>
</dbReference>
<dbReference type="GO" id="GO:0034332">
    <property type="term" value="P:adherens junction organization"/>
    <property type="evidence" value="ECO:0007669"/>
    <property type="project" value="TreeGrafter"/>
</dbReference>
<dbReference type="GO" id="GO:0016339">
    <property type="term" value="P:calcium-dependent cell-cell adhesion via plasma membrane cell adhesion molecules"/>
    <property type="evidence" value="ECO:0007669"/>
    <property type="project" value="TreeGrafter"/>
</dbReference>
<dbReference type="GO" id="GO:0016477">
    <property type="term" value="P:cell migration"/>
    <property type="evidence" value="ECO:0007669"/>
    <property type="project" value="TreeGrafter"/>
</dbReference>
<dbReference type="GO" id="GO:0000902">
    <property type="term" value="P:cell morphogenesis"/>
    <property type="evidence" value="ECO:0007669"/>
    <property type="project" value="TreeGrafter"/>
</dbReference>
<dbReference type="GO" id="GO:0044331">
    <property type="term" value="P:cell-cell adhesion mediated by cadherin"/>
    <property type="evidence" value="ECO:0007669"/>
    <property type="project" value="TreeGrafter"/>
</dbReference>
<dbReference type="GO" id="GO:0007043">
    <property type="term" value="P:cell-cell junction assembly"/>
    <property type="evidence" value="ECO:0007669"/>
    <property type="project" value="TreeGrafter"/>
</dbReference>
<dbReference type="GO" id="GO:0007156">
    <property type="term" value="P:homophilic cell adhesion via plasma membrane adhesion molecules"/>
    <property type="evidence" value="ECO:0007669"/>
    <property type="project" value="InterPro"/>
</dbReference>
<dbReference type="CDD" id="cd11304">
    <property type="entry name" value="Cadherin_repeat"/>
    <property type="match status" value="5"/>
</dbReference>
<dbReference type="FunFam" id="2.60.40.60:FF:000011">
    <property type="entry name" value="Cadherin 1"/>
    <property type="match status" value="1"/>
</dbReference>
<dbReference type="FunFam" id="2.60.40.60:FF:000095">
    <property type="entry name" value="Cadherin 13"/>
    <property type="match status" value="1"/>
</dbReference>
<dbReference type="FunFam" id="2.60.40.60:FF:000019">
    <property type="entry name" value="Cadherin 2"/>
    <property type="match status" value="1"/>
</dbReference>
<dbReference type="FunFam" id="2.60.40.60:FF:000022">
    <property type="entry name" value="Cadherin 2"/>
    <property type="match status" value="1"/>
</dbReference>
<dbReference type="FunFam" id="2.60.40.60:FF:000031">
    <property type="entry name" value="Cadherin 3"/>
    <property type="match status" value="1"/>
</dbReference>
<dbReference type="FunFam" id="2.60.40.60:FF:000148">
    <property type="entry name" value="cadherin-13 isoform X1"/>
    <property type="match status" value="1"/>
</dbReference>
<dbReference type="Gene3D" id="2.60.40.60">
    <property type="entry name" value="Cadherins"/>
    <property type="match status" value="6"/>
</dbReference>
<dbReference type="InterPro" id="IPR039808">
    <property type="entry name" value="Cadherin"/>
</dbReference>
<dbReference type="InterPro" id="IPR002126">
    <property type="entry name" value="Cadherin-like_dom"/>
</dbReference>
<dbReference type="InterPro" id="IPR015919">
    <property type="entry name" value="Cadherin-like_sf"/>
</dbReference>
<dbReference type="InterPro" id="IPR020894">
    <property type="entry name" value="Cadherin_CS"/>
</dbReference>
<dbReference type="InterPro" id="IPR014868">
    <property type="entry name" value="Cadherin_pro_dom"/>
</dbReference>
<dbReference type="PANTHER" id="PTHR24027:SF80">
    <property type="entry name" value="CADHERIN-13"/>
    <property type="match status" value="1"/>
</dbReference>
<dbReference type="PANTHER" id="PTHR24027">
    <property type="entry name" value="CADHERIN-23"/>
    <property type="match status" value="1"/>
</dbReference>
<dbReference type="Pfam" id="PF00028">
    <property type="entry name" value="Cadherin"/>
    <property type="match status" value="5"/>
</dbReference>
<dbReference type="Pfam" id="PF08758">
    <property type="entry name" value="Cadherin_pro"/>
    <property type="match status" value="1"/>
</dbReference>
<dbReference type="PRINTS" id="PR00205">
    <property type="entry name" value="CADHERIN"/>
</dbReference>
<dbReference type="SMART" id="SM00112">
    <property type="entry name" value="CA"/>
    <property type="match status" value="5"/>
</dbReference>
<dbReference type="SMART" id="SM01055">
    <property type="entry name" value="Cadherin_pro"/>
    <property type="match status" value="1"/>
</dbReference>
<dbReference type="SUPFAM" id="SSF49313">
    <property type="entry name" value="Cadherin-like"/>
    <property type="match status" value="6"/>
</dbReference>
<dbReference type="PROSITE" id="PS00232">
    <property type="entry name" value="CADHERIN_1"/>
    <property type="match status" value="3"/>
</dbReference>
<dbReference type="PROSITE" id="PS50268">
    <property type="entry name" value="CADHERIN_2"/>
    <property type="match status" value="5"/>
</dbReference>